<sequence length="457" mass="49723">MIKRTVKNIAEMVKGTLANPQYEQTVIHGVATDTRKLEQHQLFIPLKGERFDGHSFVEQAFEAGVAAVLWDRSVPNPPENHAVILVDDTLTALQQLAKAYLQELGTRVIGVTGSNGKTTTKDMIHAVLGTQYRVHKTGGNFNNHIGLPLTVLAMPENTEIAVLEMGMSAKGEIDLLSRLANPDAAVITNIGESHMQDLGSREGIAEAKLEIINGLKEDGVLIYIGDEPLLQNAYSCQTKTYGTGTHNDYQLQDVSQSEEGTHFTIKGIENTFFIPILGKHNVMNAMAAIAAGAYFGIAPEDAAKGLSGLKVTGMRLELIKTDSGLSIINDAYNASPTSMKAAIQLTESLEGYGKKMLVLGDMLELGDLEETFHKECGAVISPDKIDRVFTYGKLGAFIAEGALKHFEKDRVSHYTEKKDLLQAVKENASKGDLILFKASRGMKLEEIVKDLIESPLS</sequence>
<name>MURF_BACSU</name>
<dbReference type="EC" id="6.3.2.10" evidence="1"/>
<dbReference type="EMBL" id="AB001488">
    <property type="protein sequence ID" value="BAA19294.1"/>
    <property type="molecule type" value="Genomic_DNA"/>
</dbReference>
<dbReference type="EMBL" id="AL009126">
    <property type="protein sequence ID" value="CAB12264.1"/>
    <property type="molecule type" value="Genomic_DNA"/>
</dbReference>
<dbReference type="PIR" id="F69662">
    <property type="entry name" value="F69662"/>
</dbReference>
<dbReference type="RefSeq" id="NP_388338.1">
    <property type="nucleotide sequence ID" value="NC_000964.3"/>
</dbReference>
<dbReference type="RefSeq" id="WP_003246696.1">
    <property type="nucleotide sequence ID" value="NZ_OZ025638.1"/>
</dbReference>
<dbReference type="SMR" id="P96613"/>
<dbReference type="FunCoup" id="P96613">
    <property type="interactions" value="372"/>
</dbReference>
<dbReference type="STRING" id="224308.BSU04570"/>
<dbReference type="jPOST" id="P96613"/>
<dbReference type="PaxDb" id="224308-BSU04570"/>
<dbReference type="EnsemblBacteria" id="CAB12264">
    <property type="protein sequence ID" value="CAB12264"/>
    <property type="gene ID" value="BSU_04570"/>
</dbReference>
<dbReference type="GeneID" id="939947"/>
<dbReference type="KEGG" id="bsu:BSU04570"/>
<dbReference type="PATRIC" id="fig|224308.179.peg.485"/>
<dbReference type="eggNOG" id="COG0770">
    <property type="taxonomic scope" value="Bacteria"/>
</dbReference>
<dbReference type="InParanoid" id="P96613"/>
<dbReference type="OrthoDB" id="9801978at2"/>
<dbReference type="PhylomeDB" id="P96613"/>
<dbReference type="BioCyc" id="BSUB:BSU04570-MONOMER"/>
<dbReference type="UniPathway" id="UPA00219"/>
<dbReference type="Proteomes" id="UP000001570">
    <property type="component" value="Chromosome"/>
</dbReference>
<dbReference type="GO" id="GO:0005737">
    <property type="term" value="C:cytoplasm"/>
    <property type="evidence" value="ECO:0007669"/>
    <property type="project" value="UniProtKB-SubCell"/>
</dbReference>
<dbReference type="GO" id="GO:0005524">
    <property type="term" value="F:ATP binding"/>
    <property type="evidence" value="ECO:0007669"/>
    <property type="project" value="UniProtKB-UniRule"/>
</dbReference>
<dbReference type="GO" id="GO:0047480">
    <property type="term" value="F:UDP-N-acetylmuramoyl-tripeptide-D-alanyl-D-alanine ligase activity"/>
    <property type="evidence" value="ECO:0007669"/>
    <property type="project" value="UniProtKB-UniRule"/>
</dbReference>
<dbReference type="GO" id="GO:0008766">
    <property type="term" value="F:UDP-N-acetylmuramoylalanyl-D-glutamyl-2,6-diaminopimelate-D-alanyl-D-alanine ligase activity"/>
    <property type="evidence" value="ECO:0007669"/>
    <property type="project" value="RHEA"/>
</dbReference>
<dbReference type="GO" id="GO:0051301">
    <property type="term" value="P:cell division"/>
    <property type="evidence" value="ECO:0007669"/>
    <property type="project" value="UniProtKB-KW"/>
</dbReference>
<dbReference type="GO" id="GO:0071555">
    <property type="term" value="P:cell wall organization"/>
    <property type="evidence" value="ECO:0007669"/>
    <property type="project" value="UniProtKB-KW"/>
</dbReference>
<dbReference type="GO" id="GO:0009252">
    <property type="term" value="P:peptidoglycan biosynthetic process"/>
    <property type="evidence" value="ECO:0007669"/>
    <property type="project" value="UniProtKB-UniRule"/>
</dbReference>
<dbReference type="GO" id="GO:0008360">
    <property type="term" value="P:regulation of cell shape"/>
    <property type="evidence" value="ECO:0007669"/>
    <property type="project" value="UniProtKB-KW"/>
</dbReference>
<dbReference type="Gene3D" id="3.90.190.20">
    <property type="entry name" value="Mur ligase, C-terminal domain"/>
    <property type="match status" value="1"/>
</dbReference>
<dbReference type="Gene3D" id="3.40.1190.10">
    <property type="entry name" value="Mur-like, catalytic domain"/>
    <property type="match status" value="1"/>
</dbReference>
<dbReference type="Gene3D" id="3.40.1390.10">
    <property type="entry name" value="MurE/MurF, N-terminal domain"/>
    <property type="match status" value="1"/>
</dbReference>
<dbReference type="HAMAP" id="MF_02019">
    <property type="entry name" value="MurF"/>
    <property type="match status" value="1"/>
</dbReference>
<dbReference type="InterPro" id="IPR036565">
    <property type="entry name" value="Mur-like_cat_sf"/>
</dbReference>
<dbReference type="InterPro" id="IPR004101">
    <property type="entry name" value="Mur_ligase_C"/>
</dbReference>
<dbReference type="InterPro" id="IPR036615">
    <property type="entry name" value="Mur_ligase_C_dom_sf"/>
</dbReference>
<dbReference type="InterPro" id="IPR013221">
    <property type="entry name" value="Mur_ligase_cen"/>
</dbReference>
<dbReference type="InterPro" id="IPR000713">
    <property type="entry name" value="Mur_ligase_N"/>
</dbReference>
<dbReference type="InterPro" id="IPR051046">
    <property type="entry name" value="MurCDEF_CellWall_CoF430Synth"/>
</dbReference>
<dbReference type="InterPro" id="IPR035911">
    <property type="entry name" value="MurE/MurF_N"/>
</dbReference>
<dbReference type="InterPro" id="IPR005863">
    <property type="entry name" value="UDP-N-AcMur_synth"/>
</dbReference>
<dbReference type="NCBIfam" id="TIGR01143">
    <property type="entry name" value="murF"/>
    <property type="match status" value="1"/>
</dbReference>
<dbReference type="PANTHER" id="PTHR43024">
    <property type="entry name" value="UDP-N-ACETYLMURAMOYL-TRIPEPTIDE--D-ALANYL-D-ALANINE LIGASE"/>
    <property type="match status" value="1"/>
</dbReference>
<dbReference type="PANTHER" id="PTHR43024:SF1">
    <property type="entry name" value="UDP-N-ACETYLMURAMOYL-TRIPEPTIDE--D-ALANYL-D-ALANINE LIGASE"/>
    <property type="match status" value="1"/>
</dbReference>
<dbReference type="Pfam" id="PF01225">
    <property type="entry name" value="Mur_ligase"/>
    <property type="match status" value="1"/>
</dbReference>
<dbReference type="Pfam" id="PF02875">
    <property type="entry name" value="Mur_ligase_C"/>
    <property type="match status" value="1"/>
</dbReference>
<dbReference type="Pfam" id="PF08245">
    <property type="entry name" value="Mur_ligase_M"/>
    <property type="match status" value="1"/>
</dbReference>
<dbReference type="SUPFAM" id="SSF53623">
    <property type="entry name" value="MurD-like peptide ligases, catalytic domain"/>
    <property type="match status" value="1"/>
</dbReference>
<dbReference type="SUPFAM" id="SSF53244">
    <property type="entry name" value="MurD-like peptide ligases, peptide-binding domain"/>
    <property type="match status" value="1"/>
</dbReference>
<dbReference type="SUPFAM" id="SSF63418">
    <property type="entry name" value="MurE/MurF N-terminal domain"/>
    <property type="match status" value="1"/>
</dbReference>
<keyword id="KW-0067">ATP-binding</keyword>
<keyword id="KW-0131">Cell cycle</keyword>
<keyword id="KW-0132">Cell division</keyword>
<keyword id="KW-0133">Cell shape</keyword>
<keyword id="KW-0961">Cell wall biogenesis/degradation</keyword>
<keyword id="KW-0963">Cytoplasm</keyword>
<keyword id="KW-0436">Ligase</keyword>
<keyword id="KW-0547">Nucleotide-binding</keyword>
<keyword id="KW-0573">Peptidoglycan synthesis</keyword>
<keyword id="KW-1185">Reference proteome</keyword>
<proteinExistence type="inferred from homology"/>
<feature type="chain" id="PRO_0000101694" description="UDP-N-acetylmuramoyl-tripeptide--D-alanyl-D-alanine ligase">
    <location>
        <begin position="1"/>
        <end position="457"/>
    </location>
</feature>
<feature type="binding site" evidence="1">
    <location>
        <begin position="113"/>
        <end position="119"/>
    </location>
    <ligand>
        <name>ATP</name>
        <dbReference type="ChEBI" id="CHEBI:30616"/>
    </ligand>
</feature>
<protein>
    <recommendedName>
        <fullName evidence="1">UDP-N-acetylmuramoyl-tripeptide--D-alanyl-D-alanine ligase</fullName>
        <ecNumber evidence="1">6.3.2.10</ecNumber>
    </recommendedName>
    <alternativeName>
        <fullName evidence="1">D-alanyl-D-alanine-adding enzyme</fullName>
    </alternativeName>
    <alternativeName>
        <fullName>UDP-MurNAc-pentapeptide synthetase</fullName>
    </alternativeName>
</protein>
<organism>
    <name type="scientific">Bacillus subtilis (strain 168)</name>
    <dbReference type="NCBI Taxonomy" id="224308"/>
    <lineage>
        <taxon>Bacteria</taxon>
        <taxon>Bacillati</taxon>
        <taxon>Bacillota</taxon>
        <taxon>Bacilli</taxon>
        <taxon>Bacillales</taxon>
        <taxon>Bacillaceae</taxon>
        <taxon>Bacillus</taxon>
    </lineage>
</organism>
<gene>
    <name evidence="1" type="primary">murF</name>
    <name type="synonym">ydbQ</name>
    <name type="ordered locus">BSU04570</name>
</gene>
<comment type="function">
    <text evidence="1">Involved in cell wall formation. Catalyzes the final step in the synthesis of UDP-N-acetylmuramoyl-pentapeptide, the precursor of murein.</text>
</comment>
<comment type="catalytic activity">
    <reaction evidence="1">
        <text>D-alanyl-D-alanine + UDP-N-acetyl-alpha-D-muramoyl-L-alanyl-gamma-D-glutamyl-meso-2,6-diaminopimelate + ATP = UDP-N-acetyl-alpha-D-muramoyl-L-alanyl-gamma-D-glutamyl-meso-2,6-diaminopimeloyl-D-alanyl-D-alanine + ADP + phosphate + H(+)</text>
        <dbReference type="Rhea" id="RHEA:28374"/>
        <dbReference type="ChEBI" id="CHEBI:15378"/>
        <dbReference type="ChEBI" id="CHEBI:30616"/>
        <dbReference type="ChEBI" id="CHEBI:43474"/>
        <dbReference type="ChEBI" id="CHEBI:57822"/>
        <dbReference type="ChEBI" id="CHEBI:61386"/>
        <dbReference type="ChEBI" id="CHEBI:83905"/>
        <dbReference type="ChEBI" id="CHEBI:456216"/>
        <dbReference type="EC" id="6.3.2.10"/>
    </reaction>
</comment>
<comment type="pathway">
    <text evidence="1">Cell wall biogenesis; peptidoglycan biosynthesis.</text>
</comment>
<comment type="subcellular location">
    <subcellularLocation>
        <location evidence="1">Cytoplasm</location>
    </subcellularLocation>
</comment>
<comment type="similarity">
    <text evidence="1">Belongs to the MurCDEF family. MurF subfamily.</text>
</comment>
<reference key="1">
    <citation type="submission" date="1997-03" db="EMBL/GenBank/DDBJ databases">
        <title>A 148 kbp sequence of the region between 35 and 47 degree of the Bacillus subtilis genome.</title>
        <authorList>
            <person name="Kasahara Y."/>
            <person name="Nakai S."/>
            <person name="Lee S."/>
            <person name="Sadaie Y."/>
            <person name="Ogasawara N."/>
        </authorList>
    </citation>
    <scope>NUCLEOTIDE SEQUENCE [GENOMIC DNA]</scope>
    <source>
        <strain>168</strain>
    </source>
</reference>
<reference key="2">
    <citation type="journal article" date="1997" name="Nature">
        <title>The complete genome sequence of the Gram-positive bacterium Bacillus subtilis.</title>
        <authorList>
            <person name="Kunst F."/>
            <person name="Ogasawara N."/>
            <person name="Moszer I."/>
            <person name="Albertini A.M."/>
            <person name="Alloni G."/>
            <person name="Azevedo V."/>
            <person name="Bertero M.G."/>
            <person name="Bessieres P."/>
            <person name="Bolotin A."/>
            <person name="Borchert S."/>
            <person name="Borriss R."/>
            <person name="Boursier L."/>
            <person name="Brans A."/>
            <person name="Braun M."/>
            <person name="Brignell S.C."/>
            <person name="Bron S."/>
            <person name="Brouillet S."/>
            <person name="Bruschi C.V."/>
            <person name="Caldwell B."/>
            <person name="Capuano V."/>
            <person name="Carter N.M."/>
            <person name="Choi S.-K."/>
            <person name="Codani J.-J."/>
            <person name="Connerton I.F."/>
            <person name="Cummings N.J."/>
            <person name="Daniel R.A."/>
            <person name="Denizot F."/>
            <person name="Devine K.M."/>
            <person name="Duesterhoeft A."/>
            <person name="Ehrlich S.D."/>
            <person name="Emmerson P.T."/>
            <person name="Entian K.-D."/>
            <person name="Errington J."/>
            <person name="Fabret C."/>
            <person name="Ferrari E."/>
            <person name="Foulger D."/>
            <person name="Fritz C."/>
            <person name="Fujita M."/>
            <person name="Fujita Y."/>
            <person name="Fuma S."/>
            <person name="Galizzi A."/>
            <person name="Galleron N."/>
            <person name="Ghim S.-Y."/>
            <person name="Glaser P."/>
            <person name="Goffeau A."/>
            <person name="Golightly E.J."/>
            <person name="Grandi G."/>
            <person name="Guiseppi G."/>
            <person name="Guy B.J."/>
            <person name="Haga K."/>
            <person name="Haiech J."/>
            <person name="Harwood C.R."/>
            <person name="Henaut A."/>
            <person name="Hilbert H."/>
            <person name="Holsappel S."/>
            <person name="Hosono S."/>
            <person name="Hullo M.-F."/>
            <person name="Itaya M."/>
            <person name="Jones L.-M."/>
            <person name="Joris B."/>
            <person name="Karamata D."/>
            <person name="Kasahara Y."/>
            <person name="Klaerr-Blanchard M."/>
            <person name="Klein C."/>
            <person name="Kobayashi Y."/>
            <person name="Koetter P."/>
            <person name="Koningstein G."/>
            <person name="Krogh S."/>
            <person name="Kumano M."/>
            <person name="Kurita K."/>
            <person name="Lapidus A."/>
            <person name="Lardinois S."/>
            <person name="Lauber J."/>
            <person name="Lazarevic V."/>
            <person name="Lee S.-M."/>
            <person name="Levine A."/>
            <person name="Liu H."/>
            <person name="Masuda S."/>
            <person name="Mauel C."/>
            <person name="Medigue C."/>
            <person name="Medina N."/>
            <person name="Mellado R.P."/>
            <person name="Mizuno M."/>
            <person name="Moestl D."/>
            <person name="Nakai S."/>
            <person name="Noback M."/>
            <person name="Noone D."/>
            <person name="O'Reilly M."/>
            <person name="Ogawa K."/>
            <person name="Ogiwara A."/>
            <person name="Oudega B."/>
            <person name="Park S.-H."/>
            <person name="Parro V."/>
            <person name="Pohl T.M."/>
            <person name="Portetelle D."/>
            <person name="Porwollik S."/>
            <person name="Prescott A.M."/>
            <person name="Presecan E."/>
            <person name="Pujic P."/>
            <person name="Purnelle B."/>
            <person name="Rapoport G."/>
            <person name="Rey M."/>
            <person name="Reynolds S."/>
            <person name="Rieger M."/>
            <person name="Rivolta C."/>
            <person name="Rocha E."/>
            <person name="Roche B."/>
            <person name="Rose M."/>
            <person name="Sadaie Y."/>
            <person name="Sato T."/>
            <person name="Scanlan E."/>
            <person name="Schleich S."/>
            <person name="Schroeter R."/>
            <person name="Scoffone F."/>
            <person name="Sekiguchi J."/>
            <person name="Sekowska A."/>
            <person name="Seror S.J."/>
            <person name="Serror P."/>
            <person name="Shin B.-S."/>
            <person name="Soldo B."/>
            <person name="Sorokin A."/>
            <person name="Tacconi E."/>
            <person name="Takagi T."/>
            <person name="Takahashi H."/>
            <person name="Takemaru K."/>
            <person name="Takeuchi M."/>
            <person name="Tamakoshi A."/>
            <person name="Tanaka T."/>
            <person name="Terpstra P."/>
            <person name="Tognoni A."/>
            <person name="Tosato V."/>
            <person name="Uchiyama S."/>
            <person name="Vandenbol M."/>
            <person name="Vannier F."/>
            <person name="Vassarotti A."/>
            <person name="Viari A."/>
            <person name="Wambutt R."/>
            <person name="Wedler E."/>
            <person name="Wedler H."/>
            <person name="Weitzenegger T."/>
            <person name="Winters P."/>
            <person name="Wipat A."/>
            <person name="Yamamoto H."/>
            <person name="Yamane K."/>
            <person name="Yasumoto K."/>
            <person name="Yata K."/>
            <person name="Yoshida K."/>
            <person name="Yoshikawa H.-F."/>
            <person name="Zumstein E."/>
            <person name="Yoshikawa H."/>
            <person name="Danchin A."/>
        </authorList>
    </citation>
    <scope>NUCLEOTIDE SEQUENCE [LARGE SCALE GENOMIC DNA]</scope>
    <source>
        <strain>168</strain>
    </source>
</reference>
<accession>P96613</accession>
<evidence type="ECO:0000255" key="1">
    <source>
        <dbReference type="HAMAP-Rule" id="MF_02019"/>
    </source>
</evidence>